<proteinExistence type="inferred from homology"/>
<keyword id="KW-0963">Cytoplasm</keyword>
<keyword id="KW-0489">Methyltransferase</keyword>
<keyword id="KW-1185">Reference proteome</keyword>
<keyword id="KW-0698">rRNA processing</keyword>
<keyword id="KW-0949">S-adenosyl-L-methionine</keyword>
<keyword id="KW-0808">Transferase</keyword>
<feature type="chain" id="PRO_0000184255" description="Ribosomal RNA small subunit methyltransferase G">
    <location>
        <begin position="1"/>
        <end position="217"/>
    </location>
</feature>
<feature type="binding site" evidence="1">
    <location>
        <position position="78"/>
    </location>
    <ligand>
        <name>S-adenosyl-L-methionine</name>
        <dbReference type="ChEBI" id="CHEBI:59789"/>
    </ligand>
</feature>
<feature type="binding site" evidence="1">
    <location>
        <position position="83"/>
    </location>
    <ligand>
        <name>S-adenosyl-L-methionine</name>
        <dbReference type="ChEBI" id="CHEBI:59789"/>
    </ligand>
</feature>
<feature type="binding site" evidence="1">
    <location>
        <begin position="129"/>
        <end position="130"/>
    </location>
    <ligand>
        <name>S-adenosyl-L-methionine</name>
        <dbReference type="ChEBI" id="CHEBI:59789"/>
    </ligand>
</feature>
<feature type="binding site" evidence="1">
    <location>
        <position position="146"/>
    </location>
    <ligand>
        <name>S-adenosyl-L-methionine</name>
        <dbReference type="ChEBI" id="CHEBI:59789"/>
    </ligand>
</feature>
<comment type="function">
    <text evidence="1">Specifically methylates the N7 position of guanine in position 527 of 16S rRNA.</text>
</comment>
<comment type="catalytic activity">
    <reaction evidence="1">
        <text>guanosine(527) in 16S rRNA + S-adenosyl-L-methionine = N(7)-methylguanosine(527) in 16S rRNA + S-adenosyl-L-homocysteine</text>
        <dbReference type="Rhea" id="RHEA:42732"/>
        <dbReference type="Rhea" id="RHEA-COMP:10209"/>
        <dbReference type="Rhea" id="RHEA-COMP:10210"/>
        <dbReference type="ChEBI" id="CHEBI:57856"/>
        <dbReference type="ChEBI" id="CHEBI:59789"/>
        <dbReference type="ChEBI" id="CHEBI:74269"/>
        <dbReference type="ChEBI" id="CHEBI:74480"/>
        <dbReference type="EC" id="2.1.1.170"/>
    </reaction>
</comment>
<comment type="subcellular location">
    <subcellularLocation>
        <location evidence="1">Cytoplasm</location>
    </subcellularLocation>
</comment>
<comment type="similarity">
    <text evidence="1">Belongs to the methyltransferase superfamily. RNA methyltransferase RsmG family.</text>
</comment>
<reference key="1">
    <citation type="journal article" date="2003" name="Science">
        <title>Genome of Geobacter sulfurreducens: metal reduction in subsurface environments.</title>
        <authorList>
            <person name="Methe B.A."/>
            <person name="Nelson K.E."/>
            <person name="Eisen J.A."/>
            <person name="Paulsen I.T."/>
            <person name="Nelson W.C."/>
            <person name="Heidelberg J.F."/>
            <person name="Wu D."/>
            <person name="Wu M."/>
            <person name="Ward N.L."/>
            <person name="Beanan M.J."/>
            <person name="Dodson R.J."/>
            <person name="Madupu R."/>
            <person name="Brinkac L.M."/>
            <person name="Daugherty S.C."/>
            <person name="DeBoy R.T."/>
            <person name="Durkin A.S."/>
            <person name="Gwinn M.L."/>
            <person name="Kolonay J.F."/>
            <person name="Sullivan S.A."/>
            <person name="Haft D.H."/>
            <person name="Selengut J."/>
            <person name="Davidsen T.M."/>
            <person name="Zafar N."/>
            <person name="White O."/>
            <person name="Tran B."/>
            <person name="Romero C."/>
            <person name="Forberger H.A."/>
            <person name="Weidman J.F."/>
            <person name="Khouri H.M."/>
            <person name="Feldblyum T.V."/>
            <person name="Utterback T.R."/>
            <person name="Van Aken S.E."/>
            <person name="Lovley D.R."/>
            <person name="Fraser C.M."/>
        </authorList>
    </citation>
    <scope>NUCLEOTIDE SEQUENCE [LARGE SCALE GENOMIC DNA]</scope>
    <source>
        <strain>ATCC 51573 / DSM 12127 / PCA</strain>
    </source>
</reference>
<gene>
    <name evidence="1" type="primary">rsmG</name>
    <name type="ordered locus">GSU3463</name>
</gene>
<protein>
    <recommendedName>
        <fullName evidence="1">Ribosomal RNA small subunit methyltransferase G</fullName>
        <ecNumber evidence="1">2.1.1.170</ecNumber>
    </recommendedName>
    <alternativeName>
        <fullName evidence="1">16S rRNA 7-methylguanosine methyltransferase</fullName>
        <shortName evidence="1">16S rRNA m7G methyltransferase</shortName>
    </alternativeName>
</protein>
<dbReference type="EC" id="2.1.1.170" evidence="1"/>
<dbReference type="EMBL" id="AE017180">
    <property type="protein sequence ID" value="AAR36853.1"/>
    <property type="molecule type" value="Genomic_DNA"/>
</dbReference>
<dbReference type="RefSeq" id="NP_954503.1">
    <property type="nucleotide sequence ID" value="NC_002939.5"/>
</dbReference>
<dbReference type="RefSeq" id="WP_010944072.1">
    <property type="nucleotide sequence ID" value="NC_002939.5"/>
</dbReference>
<dbReference type="SMR" id="Q746Q5"/>
<dbReference type="FunCoup" id="Q746Q5">
    <property type="interactions" value="502"/>
</dbReference>
<dbReference type="STRING" id="243231.GSU3463"/>
<dbReference type="EnsemblBacteria" id="AAR36853">
    <property type="protein sequence ID" value="AAR36853"/>
    <property type="gene ID" value="GSU3463"/>
</dbReference>
<dbReference type="KEGG" id="gsu:GSU3463"/>
<dbReference type="PATRIC" id="fig|243231.5.peg.3485"/>
<dbReference type="eggNOG" id="COG0357">
    <property type="taxonomic scope" value="Bacteria"/>
</dbReference>
<dbReference type="HOGENOM" id="CLU_065341_2_0_7"/>
<dbReference type="InParanoid" id="Q746Q5"/>
<dbReference type="OrthoDB" id="9808773at2"/>
<dbReference type="Proteomes" id="UP000000577">
    <property type="component" value="Chromosome"/>
</dbReference>
<dbReference type="GO" id="GO:0005829">
    <property type="term" value="C:cytosol"/>
    <property type="evidence" value="ECO:0000318"/>
    <property type="project" value="GO_Central"/>
</dbReference>
<dbReference type="GO" id="GO:0070043">
    <property type="term" value="F:rRNA (guanine-N7-)-methyltransferase activity"/>
    <property type="evidence" value="ECO:0000318"/>
    <property type="project" value="GO_Central"/>
</dbReference>
<dbReference type="FunFam" id="3.40.50.150:FF:000830">
    <property type="entry name" value="Ribosomal RNA small subunit methyltransferase G"/>
    <property type="match status" value="1"/>
</dbReference>
<dbReference type="Gene3D" id="3.40.50.150">
    <property type="entry name" value="Vaccinia Virus protein VP39"/>
    <property type="match status" value="1"/>
</dbReference>
<dbReference type="HAMAP" id="MF_00074">
    <property type="entry name" value="16SrRNA_methyltr_G"/>
    <property type="match status" value="1"/>
</dbReference>
<dbReference type="InterPro" id="IPR003682">
    <property type="entry name" value="rRNA_ssu_MeTfrase_G"/>
</dbReference>
<dbReference type="InterPro" id="IPR029063">
    <property type="entry name" value="SAM-dependent_MTases_sf"/>
</dbReference>
<dbReference type="NCBIfam" id="TIGR00138">
    <property type="entry name" value="rsmG_gidB"/>
    <property type="match status" value="1"/>
</dbReference>
<dbReference type="PANTHER" id="PTHR31760">
    <property type="entry name" value="S-ADENOSYL-L-METHIONINE-DEPENDENT METHYLTRANSFERASES SUPERFAMILY PROTEIN"/>
    <property type="match status" value="1"/>
</dbReference>
<dbReference type="PANTHER" id="PTHR31760:SF0">
    <property type="entry name" value="S-ADENOSYL-L-METHIONINE-DEPENDENT METHYLTRANSFERASES SUPERFAMILY PROTEIN"/>
    <property type="match status" value="1"/>
</dbReference>
<dbReference type="Pfam" id="PF02527">
    <property type="entry name" value="GidB"/>
    <property type="match status" value="1"/>
</dbReference>
<dbReference type="PIRSF" id="PIRSF003078">
    <property type="entry name" value="GidB"/>
    <property type="match status" value="1"/>
</dbReference>
<dbReference type="SUPFAM" id="SSF53335">
    <property type="entry name" value="S-adenosyl-L-methionine-dependent methyltransferases"/>
    <property type="match status" value="1"/>
</dbReference>
<name>RSMG_GEOSL</name>
<evidence type="ECO:0000255" key="1">
    <source>
        <dbReference type="HAMAP-Rule" id="MF_00074"/>
    </source>
</evidence>
<accession>Q746Q5</accession>
<organism>
    <name type="scientific">Geobacter sulfurreducens (strain ATCC 51573 / DSM 12127 / PCA)</name>
    <dbReference type="NCBI Taxonomy" id="243231"/>
    <lineage>
        <taxon>Bacteria</taxon>
        <taxon>Pseudomonadati</taxon>
        <taxon>Thermodesulfobacteriota</taxon>
        <taxon>Desulfuromonadia</taxon>
        <taxon>Geobacterales</taxon>
        <taxon>Geobacteraceae</taxon>
        <taxon>Geobacter</taxon>
    </lineage>
</organism>
<sequence>MNGRACRILQEGAAELGVEISDELVTLFSLFADELKKWNRKINLTAITGDEEIALKHFVDSLALCRLVSGDDELLDLGSGGGFPVLPLALVFPTMTAVSVDAVEKKIIFQRHAARLLGCRRFEAIHARGEDLPRMLERRFNRIVSRAFSDIPSFARMALPLLMPQGTIIAMKGRGGAEEADAARGALEEMGLTVVRVTEYRLPFSGDARTLVEIGFC</sequence>